<comment type="function">
    <text evidence="1">Negative regulator of class I heat shock genes (grpE-dnaK-dnaJ and groELS operons). Prevents heat-shock induction of these operons.</text>
</comment>
<comment type="similarity">
    <text evidence="1">Belongs to the HrcA family.</text>
</comment>
<name>HRCA_ARTS2</name>
<accession>A0JX46</accession>
<keyword id="KW-1185">Reference proteome</keyword>
<keyword id="KW-0678">Repressor</keyword>
<keyword id="KW-0346">Stress response</keyword>
<keyword id="KW-0804">Transcription</keyword>
<keyword id="KW-0805">Transcription regulation</keyword>
<feature type="chain" id="PRO_1000010374" description="Heat-inducible transcription repressor HrcA">
    <location>
        <begin position="1"/>
        <end position="337"/>
    </location>
</feature>
<evidence type="ECO:0000255" key="1">
    <source>
        <dbReference type="HAMAP-Rule" id="MF_00081"/>
    </source>
</evidence>
<proteinExistence type="inferred from homology"/>
<reference key="1">
    <citation type="journal article" date="2013" name="Stand. Genomic Sci.">
        <title>Complete genome sequence of Arthrobacter sp. strain FB24.</title>
        <authorList>
            <person name="Nakatsu C.H."/>
            <person name="Barabote R."/>
            <person name="Thompson S."/>
            <person name="Bruce D."/>
            <person name="Detter C."/>
            <person name="Brettin T."/>
            <person name="Han C."/>
            <person name="Beasley F."/>
            <person name="Chen W."/>
            <person name="Konopka A."/>
            <person name="Xie G."/>
        </authorList>
    </citation>
    <scope>NUCLEOTIDE SEQUENCE [LARGE SCALE GENOMIC DNA]</scope>
    <source>
        <strain>FB24</strain>
    </source>
</reference>
<organism>
    <name type="scientific">Arthrobacter sp. (strain FB24)</name>
    <dbReference type="NCBI Taxonomy" id="290399"/>
    <lineage>
        <taxon>Bacteria</taxon>
        <taxon>Bacillati</taxon>
        <taxon>Actinomycetota</taxon>
        <taxon>Actinomycetes</taxon>
        <taxon>Micrococcales</taxon>
        <taxon>Micrococcaceae</taxon>
        <taxon>Arthrobacter</taxon>
    </lineage>
</organism>
<protein>
    <recommendedName>
        <fullName evidence="1">Heat-inducible transcription repressor HrcA</fullName>
    </recommendedName>
</protein>
<dbReference type="EMBL" id="CP000454">
    <property type="protein sequence ID" value="ABK03616.1"/>
    <property type="molecule type" value="Genomic_DNA"/>
</dbReference>
<dbReference type="RefSeq" id="WP_011692080.1">
    <property type="nucleotide sequence ID" value="NC_008541.1"/>
</dbReference>
<dbReference type="SMR" id="A0JX46"/>
<dbReference type="STRING" id="290399.Arth_2236"/>
<dbReference type="KEGG" id="art:Arth_2236"/>
<dbReference type="eggNOG" id="COG1420">
    <property type="taxonomic scope" value="Bacteria"/>
</dbReference>
<dbReference type="HOGENOM" id="CLU_050019_2_0_11"/>
<dbReference type="OrthoDB" id="9783139at2"/>
<dbReference type="Proteomes" id="UP000000754">
    <property type="component" value="Chromosome"/>
</dbReference>
<dbReference type="GO" id="GO:0003677">
    <property type="term" value="F:DNA binding"/>
    <property type="evidence" value="ECO:0007669"/>
    <property type="project" value="InterPro"/>
</dbReference>
<dbReference type="GO" id="GO:0003700">
    <property type="term" value="F:DNA-binding transcription factor activity"/>
    <property type="evidence" value="ECO:0007669"/>
    <property type="project" value="InterPro"/>
</dbReference>
<dbReference type="GO" id="GO:0045892">
    <property type="term" value="P:negative regulation of DNA-templated transcription"/>
    <property type="evidence" value="ECO:0007669"/>
    <property type="project" value="UniProtKB-UniRule"/>
</dbReference>
<dbReference type="FunFam" id="1.10.10.10:FF:000049">
    <property type="entry name" value="Heat-inducible transcription repressor HrcA"/>
    <property type="match status" value="1"/>
</dbReference>
<dbReference type="Gene3D" id="3.30.450.40">
    <property type="match status" value="1"/>
</dbReference>
<dbReference type="Gene3D" id="3.30.390.60">
    <property type="entry name" value="Heat-inducible transcription repressor hrca homolog, domain 3"/>
    <property type="match status" value="1"/>
</dbReference>
<dbReference type="Gene3D" id="1.10.10.10">
    <property type="entry name" value="Winged helix-like DNA-binding domain superfamily/Winged helix DNA-binding domain"/>
    <property type="match status" value="1"/>
</dbReference>
<dbReference type="HAMAP" id="MF_00081">
    <property type="entry name" value="HrcA"/>
    <property type="match status" value="1"/>
</dbReference>
<dbReference type="InterPro" id="IPR001034">
    <property type="entry name" value="DeoR_HTH"/>
</dbReference>
<dbReference type="InterPro" id="IPR029016">
    <property type="entry name" value="GAF-like_dom_sf"/>
</dbReference>
<dbReference type="InterPro" id="IPR002571">
    <property type="entry name" value="HrcA"/>
</dbReference>
<dbReference type="InterPro" id="IPR021153">
    <property type="entry name" value="HrcA_C"/>
</dbReference>
<dbReference type="InterPro" id="IPR036388">
    <property type="entry name" value="WH-like_DNA-bd_sf"/>
</dbReference>
<dbReference type="InterPro" id="IPR036390">
    <property type="entry name" value="WH_DNA-bd_sf"/>
</dbReference>
<dbReference type="InterPro" id="IPR023120">
    <property type="entry name" value="WHTH_transcript_rep_HrcA_IDD"/>
</dbReference>
<dbReference type="NCBIfam" id="TIGR00331">
    <property type="entry name" value="hrcA"/>
    <property type="match status" value="1"/>
</dbReference>
<dbReference type="PANTHER" id="PTHR34824">
    <property type="entry name" value="HEAT-INDUCIBLE TRANSCRIPTION REPRESSOR HRCA"/>
    <property type="match status" value="1"/>
</dbReference>
<dbReference type="PANTHER" id="PTHR34824:SF1">
    <property type="entry name" value="HEAT-INDUCIBLE TRANSCRIPTION REPRESSOR HRCA"/>
    <property type="match status" value="1"/>
</dbReference>
<dbReference type="Pfam" id="PF01628">
    <property type="entry name" value="HrcA"/>
    <property type="match status" value="1"/>
</dbReference>
<dbReference type="Pfam" id="PF08220">
    <property type="entry name" value="HTH_DeoR"/>
    <property type="match status" value="1"/>
</dbReference>
<dbReference type="PIRSF" id="PIRSF005485">
    <property type="entry name" value="HrcA"/>
    <property type="match status" value="1"/>
</dbReference>
<dbReference type="SUPFAM" id="SSF55781">
    <property type="entry name" value="GAF domain-like"/>
    <property type="match status" value="1"/>
</dbReference>
<dbReference type="SUPFAM" id="SSF46785">
    <property type="entry name" value="Winged helix' DNA-binding domain"/>
    <property type="match status" value="1"/>
</dbReference>
<gene>
    <name evidence="1" type="primary">hrcA</name>
    <name type="ordered locus">Arth_2236</name>
</gene>
<sequence length="337" mass="36282">MSEPRKLEVLRAIVEDYVHSREPVGSKALVERHHLGVSSATIRNDMAALEDEGLITAPHTSAGRIPTDKGYRLFVDQISAVKPLSQAERRAIQTLLEGSEDLDDVLERTVRLLSQLTNQVAVVQYPHLSRAMVRHIEFVLLAPRQVLIVLIADTGKVEQRVIDVGQELGDDALAGLRARFLKSLAGTPLSLLPQALPAVVAGCEPSRRHAAQALARGLDALASSSREERMVMAGTANLARSNVDFPLSIGPVLEALEEQVVMLRLLSDMAQDPRGVTVSIGRENPYDGLAEASVVATGYGPGSSAKVGVLGPTRMDYPTTMAAVRAVARYLSRILGP</sequence>